<organism>
    <name type="scientific">Sulfurimonas denitrificans (strain ATCC 33889 / DSM 1251)</name>
    <name type="common">Thiomicrospira denitrificans (strain ATCC 33889 / DSM 1251)</name>
    <dbReference type="NCBI Taxonomy" id="326298"/>
    <lineage>
        <taxon>Bacteria</taxon>
        <taxon>Pseudomonadati</taxon>
        <taxon>Campylobacterota</taxon>
        <taxon>Epsilonproteobacteria</taxon>
        <taxon>Campylobacterales</taxon>
        <taxon>Sulfurimonadaceae</taxon>
        <taxon>Sulfurimonas</taxon>
    </lineage>
</organism>
<comment type="function">
    <text evidence="1">Catalyzes the conversion of 3-deoxy-D-arabino-heptulosonate 7-phosphate (DAHP) to dehydroquinate (DHQ).</text>
</comment>
<comment type="catalytic activity">
    <reaction evidence="1">
        <text>7-phospho-2-dehydro-3-deoxy-D-arabino-heptonate = 3-dehydroquinate + phosphate</text>
        <dbReference type="Rhea" id="RHEA:21968"/>
        <dbReference type="ChEBI" id="CHEBI:32364"/>
        <dbReference type="ChEBI" id="CHEBI:43474"/>
        <dbReference type="ChEBI" id="CHEBI:58394"/>
        <dbReference type="EC" id="4.2.3.4"/>
    </reaction>
</comment>
<comment type="cofactor">
    <cofactor evidence="1">
        <name>Co(2+)</name>
        <dbReference type="ChEBI" id="CHEBI:48828"/>
    </cofactor>
    <cofactor evidence="1">
        <name>Zn(2+)</name>
        <dbReference type="ChEBI" id="CHEBI:29105"/>
    </cofactor>
    <text evidence="1">Binds 1 divalent metal cation per subunit. Can use either Co(2+) or Zn(2+).</text>
</comment>
<comment type="cofactor">
    <cofactor evidence="1">
        <name>NAD(+)</name>
        <dbReference type="ChEBI" id="CHEBI:57540"/>
    </cofactor>
</comment>
<comment type="pathway">
    <text evidence="1">Metabolic intermediate biosynthesis; chorismate biosynthesis; chorismate from D-erythrose 4-phosphate and phosphoenolpyruvate: step 2/7.</text>
</comment>
<comment type="subcellular location">
    <subcellularLocation>
        <location evidence="1">Cytoplasm</location>
    </subcellularLocation>
</comment>
<comment type="similarity">
    <text evidence="1">Belongs to the sugar phosphate cyclases superfamily. Dehydroquinate synthase family.</text>
</comment>
<keyword id="KW-0028">Amino-acid biosynthesis</keyword>
<keyword id="KW-0057">Aromatic amino acid biosynthesis</keyword>
<keyword id="KW-0170">Cobalt</keyword>
<keyword id="KW-0963">Cytoplasm</keyword>
<keyword id="KW-0456">Lyase</keyword>
<keyword id="KW-0479">Metal-binding</keyword>
<keyword id="KW-0520">NAD</keyword>
<keyword id="KW-0547">Nucleotide-binding</keyword>
<keyword id="KW-1185">Reference proteome</keyword>
<keyword id="KW-0862">Zinc</keyword>
<protein>
    <recommendedName>
        <fullName evidence="1">3-dehydroquinate synthase</fullName>
        <shortName evidence="1">DHQS</shortName>
        <ecNumber evidence="1">4.2.3.4</ecNumber>
    </recommendedName>
</protein>
<evidence type="ECO:0000255" key="1">
    <source>
        <dbReference type="HAMAP-Rule" id="MF_00110"/>
    </source>
</evidence>
<sequence>MQVHIELKKVVDNSYDITIGTLPTLHFDTKVAVVTNSTISALHLEYLLSKISAKELYVVTLRDGEEYKNQQSIDTILEALFENRFNRKSMIIAFGGGVIGDMSGYAASIYQRGIDFIQIPTTLLSQVDASVGGKTGMNNRYGKNLVGAFHQPRAVYIDPHFLTTLPPREFGAGVAEIVKMAVTFDKDFFEFLERADLSKPEILQEAIKKALQTKAKVVTQDEKEQGIRAALNYGHTFGHVVENETAYKEFLHGEAVAIGMVMANEMAIKMNYMFEKEALRVKALLQKYNLPTTYAIKDVKAFYEAFFLDKKSSDSAITFILPLGIGDVVITDKVDTGTIMCVLNKFGKQ</sequence>
<dbReference type="EC" id="4.2.3.4" evidence="1"/>
<dbReference type="EMBL" id="CP000153">
    <property type="protein sequence ID" value="ABB44298.1"/>
    <property type="molecule type" value="Genomic_DNA"/>
</dbReference>
<dbReference type="RefSeq" id="WP_011372650.1">
    <property type="nucleotide sequence ID" value="NC_007575.1"/>
</dbReference>
<dbReference type="SMR" id="Q30RT3"/>
<dbReference type="STRING" id="326298.Suden_1020"/>
<dbReference type="KEGG" id="tdn:Suden_1020"/>
<dbReference type="eggNOG" id="COG0337">
    <property type="taxonomic scope" value="Bacteria"/>
</dbReference>
<dbReference type="HOGENOM" id="CLU_001201_0_2_7"/>
<dbReference type="OrthoDB" id="9806583at2"/>
<dbReference type="UniPathway" id="UPA00053">
    <property type="reaction ID" value="UER00085"/>
</dbReference>
<dbReference type="Proteomes" id="UP000002714">
    <property type="component" value="Chromosome"/>
</dbReference>
<dbReference type="GO" id="GO:0005737">
    <property type="term" value="C:cytoplasm"/>
    <property type="evidence" value="ECO:0007669"/>
    <property type="project" value="UniProtKB-SubCell"/>
</dbReference>
<dbReference type="GO" id="GO:0003856">
    <property type="term" value="F:3-dehydroquinate synthase activity"/>
    <property type="evidence" value="ECO:0007669"/>
    <property type="project" value="UniProtKB-UniRule"/>
</dbReference>
<dbReference type="GO" id="GO:0046872">
    <property type="term" value="F:metal ion binding"/>
    <property type="evidence" value="ECO:0007669"/>
    <property type="project" value="UniProtKB-KW"/>
</dbReference>
<dbReference type="GO" id="GO:0000166">
    <property type="term" value="F:nucleotide binding"/>
    <property type="evidence" value="ECO:0007669"/>
    <property type="project" value="UniProtKB-KW"/>
</dbReference>
<dbReference type="GO" id="GO:0008652">
    <property type="term" value="P:amino acid biosynthetic process"/>
    <property type="evidence" value="ECO:0007669"/>
    <property type="project" value="UniProtKB-KW"/>
</dbReference>
<dbReference type="GO" id="GO:0009073">
    <property type="term" value="P:aromatic amino acid family biosynthetic process"/>
    <property type="evidence" value="ECO:0007669"/>
    <property type="project" value="UniProtKB-KW"/>
</dbReference>
<dbReference type="GO" id="GO:0009423">
    <property type="term" value="P:chorismate biosynthetic process"/>
    <property type="evidence" value="ECO:0007669"/>
    <property type="project" value="UniProtKB-UniRule"/>
</dbReference>
<dbReference type="CDD" id="cd08195">
    <property type="entry name" value="DHQS"/>
    <property type="match status" value="1"/>
</dbReference>
<dbReference type="FunFam" id="3.40.50.1970:FF:000007">
    <property type="entry name" value="Pentafunctional AROM polypeptide"/>
    <property type="match status" value="1"/>
</dbReference>
<dbReference type="Gene3D" id="3.40.50.1970">
    <property type="match status" value="1"/>
</dbReference>
<dbReference type="Gene3D" id="1.20.1090.10">
    <property type="entry name" value="Dehydroquinate synthase-like - alpha domain"/>
    <property type="match status" value="1"/>
</dbReference>
<dbReference type="HAMAP" id="MF_00110">
    <property type="entry name" value="DHQ_synthase"/>
    <property type="match status" value="1"/>
</dbReference>
<dbReference type="InterPro" id="IPR050071">
    <property type="entry name" value="Dehydroquinate_synthase"/>
</dbReference>
<dbReference type="InterPro" id="IPR016037">
    <property type="entry name" value="DHQ_synth_AroB"/>
</dbReference>
<dbReference type="InterPro" id="IPR030963">
    <property type="entry name" value="DHQ_synth_fam"/>
</dbReference>
<dbReference type="InterPro" id="IPR030960">
    <property type="entry name" value="DHQS/DOIS_N"/>
</dbReference>
<dbReference type="InterPro" id="IPR056179">
    <property type="entry name" value="DHQS_C"/>
</dbReference>
<dbReference type="NCBIfam" id="TIGR01357">
    <property type="entry name" value="aroB"/>
    <property type="match status" value="1"/>
</dbReference>
<dbReference type="PANTHER" id="PTHR43622">
    <property type="entry name" value="3-DEHYDROQUINATE SYNTHASE"/>
    <property type="match status" value="1"/>
</dbReference>
<dbReference type="PANTHER" id="PTHR43622:SF7">
    <property type="entry name" value="3-DEHYDROQUINATE SYNTHASE, CHLOROPLASTIC"/>
    <property type="match status" value="1"/>
</dbReference>
<dbReference type="Pfam" id="PF01761">
    <property type="entry name" value="DHQ_synthase"/>
    <property type="match status" value="1"/>
</dbReference>
<dbReference type="Pfam" id="PF24621">
    <property type="entry name" value="DHQS_C"/>
    <property type="match status" value="1"/>
</dbReference>
<dbReference type="PIRSF" id="PIRSF001455">
    <property type="entry name" value="DHQ_synth"/>
    <property type="match status" value="1"/>
</dbReference>
<dbReference type="SUPFAM" id="SSF56796">
    <property type="entry name" value="Dehydroquinate synthase-like"/>
    <property type="match status" value="1"/>
</dbReference>
<gene>
    <name evidence="1" type="primary">aroB</name>
    <name type="ordered locus">Suden_1020</name>
</gene>
<name>AROB_SULDN</name>
<accession>Q30RT3</accession>
<proteinExistence type="inferred from homology"/>
<feature type="chain" id="PRO_0000231141" description="3-dehydroquinate synthase">
    <location>
        <begin position="1"/>
        <end position="349"/>
    </location>
</feature>
<feature type="binding site" evidence="1">
    <location>
        <begin position="63"/>
        <end position="68"/>
    </location>
    <ligand>
        <name>NAD(+)</name>
        <dbReference type="ChEBI" id="CHEBI:57540"/>
    </ligand>
</feature>
<feature type="binding site" evidence="1">
    <location>
        <begin position="97"/>
        <end position="101"/>
    </location>
    <ligand>
        <name>NAD(+)</name>
        <dbReference type="ChEBI" id="CHEBI:57540"/>
    </ligand>
</feature>
<feature type="binding site" evidence="1">
    <location>
        <begin position="121"/>
        <end position="122"/>
    </location>
    <ligand>
        <name>NAD(+)</name>
        <dbReference type="ChEBI" id="CHEBI:57540"/>
    </ligand>
</feature>
<feature type="binding site" evidence="1">
    <location>
        <position position="134"/>
    </location>
    <ligand>
        <name>NAD(+)</name>
        <dbReference type="ChEBI" id="CHEBI:57540"/>
    </ligand>
</feature>
<feature type="binding site" evidence="1">
    <location>
        <position position="143"/>
    </location>
    <ligand>
        <name>NAD(+)</name>
        <dbReference type="ChEBI" id="CHEBI:57540"/>
    </ligand>
</feature>
<feature type="binding site" evidence="1">
    <location>
        <begin position="161"/>
        <end position="164"/>
    </location>
    <ligand>
        <name>NAD(+)</name>
        <dbReference type="ChEBI" id="CHEBI:57540"/>
    </ligand>
</feature>
<feature type="binding site" evidence="1">
    <location>
        <position position="176"/>
    </location>
    <ligand>
        <name>Zn(2+)</name>
        <dbReference type="ChEBI" id="CHEBI:29105"/>
    </ligand>
</feature>
<feature type="binding site" evidence="1">
    <location>
        <position position="235"/>
    </location>
    <ligand>
        <name>Zn(2+)</name>
        <dbReference type="ChEBI" id="CHEBI:29105"/>
    </ligand>
</feature>
<feature type="binding site" evidence="1">
    <location>
        <position position="252"/>
    </location>
    <ligand>
        <name>Zn(2+)</name>
        <dbReference type="ChEBI" id="CHEBI:29105"/>
    </ligand>
</feature>
<reference key="1">
    <citation type="journal article" date="2008" name="Appl. Environ. Microbiol.">
        <title>Genome of the epsilonproteobacterial chemolithoautotroph Sulfurimonas denitrificans.</title>
        <authorList>
            <person name="Sievert S.M."/>
            <person name="Scott K.M."/>
            <person name="Klotz M.G."/>
            <person name="Chain P.S.G."/>
            <person name="Hauser L.J."/>
            <person name="Hemp J."/>
            <person name="Huegler M."/>
            <person name="Land M."/>
            <person name="Lapidus A."/>
            <person name="Larimer F.W."/>
            <person name="Lucas S."/>
            <person name="Malfatti S.A."/>
            <person name="Meyer F."/>
            <person name="Paulsen I.T."/>
            <person name="Ren Q."/>
            <person name="Simon J."/>
            <person name="Bailey K."/>
            <person name="Diaz E."/>
            <person name="Fitzpatrick K.A."/>
            <person name="Glover B."/>
            <person name="Gwatney N."/>
            <person name="Korajkic A."/>
            <person name="Long A."/>
            <person name="Mobberley J.M."/>
            <person name="Pantry S.N."/>
            <person name="Pazder G."/>
            <person name="Peterson S."/>
            <person name="Quintanilla J.D."/>
            <person name="Sprinkle R."/>
            <person name="Stephens J."/>
            <person name="Thomas P."/>
            <person name="Vaughn R."/>
            <person name="Weber M.J."/>
            <person name="Wooten L.L."/>
        </authorList>
    </citation>
    <scope>NUCLEOTIDE SEQUENCE [LARGE SCALE GENOMIC DNA]</scope>
    <source>
        <strain>ATCC 33889 / DSM 1251</strain>
    </source>
</reference>